<reference evidence="5" key="1">
    <citation type="journal article" date="2001" name="Cell">
        <title>A central role for P48/45 in malaria parasite male gamete fertility.</title>
        <authorList>
            <person name="van Dijk M.R."/>
            <person name="Janse C.J."/>
            <person name="Thompson J."/>
            <person name="Waters A.P."/>
            <person name="Braks J.A."/>
            <person name="Dodemont H.J."/>
            <person name="Stunnenberg H.G."/>
            <person name="van Gemert G.J."/>
            <person name="Sauerwein R.W."/>
            <person name="Eling W."/>
        </authorList>
    </citation>
    <scope>NUCLEOTIDE SEQUENCE [GENOMIC DNA]</scope>
    <source>
        <strain evidence="5">ANKA</strain>
    </source>
</reference>
<reference evidence="7" key="2">
    <citation type="journal article" date="2014" name="BMC Biol.">
        <title>A comprehensive evaluation of rodent malaria parasite genomes and gene expression.</title>
        <authorList>
            <person name="Otto T.D."/>
            <person name="Bohme U."/>
            <person name="Jackson A.P."/>
            <person name="Hunt M."/>
            <person name="Franke-Fayard B."/>
            <person name="Hoeijmakers W.A."/>
            <person name="Religa A.A."/>
            <person name="Robertson L."/>
            <person name="Sanders M."/>
            <person name="Ogun S.A."/>
            <person name="Cunningham D."/>
            <person name="Erhart A."/>
            <person name="Billker O."/>
            <person name="Khan S.M."/>
            <person name="Stunnenberg H.G."/>
            <person name="Langhorne J."/>
            <person name="Holder A.A."/>
            <person name="Waters A.P."/>
            <person name="Newbold C.I."/>
            <person name="Pain A."/>
            <person name="Berriman M."/>
            <person name="Janse C.J."/>
        </authorList>
    </citation>
    <scope>NUCLEOTIDE SEQUENCE [LARGE SCALE GENOMIC DNA]</scope>
    <source>
        <strain evidence="7">ANKA</strain>
    </source>
</reference>
<reference key="3">
    <citation type="journal article" date="2010" name="PLoS Pathog.">
        <title>Three members of the 6-cys protein family of Plasmodium play a role in gamete fertility.</title>
        <authorList>
            <person name="van Dijk M.R."/>
            <person name="van Schaijk B.C."/>
            <person name="Khan S.M."/>
            <person name="van Dooren M.W."/>
            <person name="Ramesar J."/>
            <person name="Kaczanowski S."/>
            <person name="van Gemert G.J."/>
            <person name="Kroeze H."/>
            <person name="Stunnenberg H.G."/>
            <person name="Eling W.M."/>
            <person name="Sauerwein R.W."/>
            <person name="Waters A.P."/>
            <person name="Janse C.J."/>
        </authorList>
    </citation>
    <scope>FUNCTION</scope>
    <scope>DISRUPTION PHENOTYPE</scope>
    <scope>DEVELOPMENTAL STAGE</scope>
    <source>
        <strain>ANKA</strain>
    </source>
</reference>
<proteinExistence type="evidence at transcript level"/>
<keyword id="KW-1003">Cell membrane</keyword>
<keyword id="KW-1015">Disulfide bond</keyword>
<keyword id="KW-0325">Glycoprotein</keyword>
<keyword id="KW-0336">GPI-anchor</keyword>
<keyword id="KW-0449">Lipoprotein</keyword>
<keyword id="KW-0461">Malaria</keyword>
<keyword id="KW-0472">Membrane</keyword>
<keyword id="KW-1185">Reference proteome</keyword>
<keyword id="KW-0677">Repeat</keyword>
<keyword id="KW-0732">Signal</keyword>
<sequence length="431" mass="48929">MKGFTGASIIVFYLIKGYLSYIIFPNGYVCDFKFNPLVNVLPSINTTGDIEEVGCTINNPSLSDYIALVCPKKNYNDYEHMEKVPSKCFSSNLYSPYKSEDSAHKLEELKIPEKYSISKDFSDFDLNIILIPSLYNIDKTIYCRCDNSKTKRELIKNDGENIKLQGKLGLVKIILNNQQNSPQNIYHITRSTQVGSLDNKVIELKEGEIVHLKYDGKTRTNFNCKEIINMKISIPLDYNLSMRMPTVFLKDINCKFHLIFSNVGGIANIVFKAKKTENIDGCDFTVPKGKGLYKNGFALSEINNDEEICTVHIGRGQNSNAAGLKCPYNLTPAHCFKHVLYEKKYKNGNNVFQTFLLDDVLRTVDIEYYYNAKLSAHIVGIPTIPEKSETVRCVCEHDGKKGIMELKISSSKNIFISFILLSIIVSIFYLF</sequence>
<accession>Q9BMP8</accession>
<accession>A0A509APH2</accession>
<accession>Q4YSU5</accession>
<dbReference type="EMBL" id="AF314253">
    <property type="protein sequence ID" value="AAG59814.1"/>
    <property type="molecule type" value="Genomic_DNA"/>
</dbReference>
<dbReference type="EMBL" id="LK023128">
    <property type="protein sequence ID" value="VUC57984.1"/>
    <property type="molecule type" value="Genomic_DNA"/>
</dbReference>
<dbReference type="GlyCosmos" id="Q9BMP8">
    <property type="glycosylation" value="2 sites, No reported glycans"/>
</dbReference>
<dbReference type="VEuPathDB" id="PlasmoDB:PBANKA_1359700"/>
<dbReference type="eggNOG" id="ENOG502TMWJ">
    <property type="taxonomic scope" value="Eukaryota"/>
</dbReference>
<dbReference type="HOGENOM" id="CLU_052271_0_0_1"/>
<dbReference type="InParanoid" id="A0A509APH2"/>
<dbReference type="OMA" id="DFALNPH"/>
<dbReference type="Proteomes" id="UP000074855">
    <property type="component" value="Chromosome 13"/>
</dbReference>
<dbReference type="GO" id="GO:0009986">
    <property type="term" value="C:cell surface"/>
    <property type="evidence" value="ECO:0007669"/>
    <property type="project" value="UniProtKB-SubCell"/>
</dbReference>
<dbReference type="GO" id="GO:0005886">
    <property type="term" value="C:plasma membrane"/>
    <property type="evidence" value="ECO:0007669"/>
    <property type="project" value="UniProtKB-SubCell"/>
</dbReference>
<dbReference type="GO" id="GO:0098552">
    <property type="term" value="C:side of membrane"/>
    <property type="evidence" value="ECO:0007669"/>
    <property type="project" value="UniProtKB-KW"/>
</dbReference>
<dbReference type="Gene3D" id="2.60.40.2860">
    <property type="match status" value="2"/>
</dbReference>
<dbReference type="InterPro" id="IPR010884">
    <property type="entry name" value="6_CYS_dom"/>
</dbReference>
<dbReference type="InterPro" id="IPR038160">
    <property type="entry name" value="6_CYS_dom_sf"/>
</dbReference>
<dbReference type="Pfam" id="PF07422">
    <property type="entry name" value="s48_45"/>
    <property type="match status" value="2"/>
</dbReference>
<dbReference type="SMART" id="SM00970">
    <property type="entry name" value="s48_45"/>
    <property type="match status" value="2"/>
</dbReference>
<dbReference type="PROSITE" id="PS51701">
    <property type="entry name" value="6_CYS"/>
    <property type="match status" value="2"/>
</dbReference>
<protein>
    <recommendedName>
        <fullName>Female gametocyte surface protein P47</fullName>
    </recommendedName>
</protein>
<comment type="function">
    <text evidence="4">Required for female fertility.</text>
</comment>
<comment type="subcellular location">
    <subcellularLocation>
        <location evidence="1">Cell surface</location>
    </subcellularLocation>
    <subcellularLocation>
        <location evidence="1">Cell membrane</location>
        <topology evidence="1">Lipid-anchor</topology>
        <topology evidence="1">GPI-anchor</topology>
    </subcellularLocation>
    <text evidence="1">Specifically present on the surface of female gametocytes.</text>
</comment>
<comment type="developmental stage">
    <text evidence="4">Expressed only in female gametocytes.</text>
</comment>
<comment type="disruption phenotype">
    <text evidence="4">Strong reduction of female fertility, while males remain unaffected. Gametes are unable to either recognize or attach to each other.</text>
</comment>
<organism>
    <name type="scientific">Plasmodium berghei (strain Anka)</name>
    <dbReference type="NCBI Taxonomy" id="5823"/>
    <lineage>
        <taxon>Eukaryota</taxon>
        <taxon>Sar</taxon>
        <taxon>Alveolata</taxon>
        <taxon>Apicomplexa</taxon>
        <taxon>Aconoidasida</taxon>
        <taxon>Haemosporida</taxon>
        <taxon>Plasmodiidae</taxon>
        <taxon>Plasmodium</taxon>
        <taxon>Plasmodium (Vinckeia)</taxon>
    </lineage>
</organism>
<name>PFS47_PLABA</name>
<feature type="signal peptide" evidence="2">
    <location>
        <begin position="1"/>
        <end position="20"/>
    </location>
</feature>
<feature type="chain" id="PRO_0000423581" description="Female gametocyte surface protein P47">
    <location>
        <begin position="21"/>
        <end position="409"/>
    </location>
</feature>
<feature type="propeptide" id="PRO_0000423582" description="Removed in mature form" evidence="2">
    <location>
        <begin position="410"/>
        <end position="431"/>
    </location>
</feature>
<feature type="domain" description="6-Cys 1" evidence="3">
    <location>
        <begin position="26"/>
        <end position="178"/>
    </location>
</feature>
<feature type="domain" description="6-Cys 2" evidence="3">
    <location>
        <begin position="278"/>
        <end position="413"/>
    </location>
</feature>
<feature type="lipid moiety-binding region" description="GPI-anchor amidated serine" evidence="2">
    <location>
        <position position="409"/>
    </location>
</feature>
<feature type="glycosylation site" description="N-linked (GlcNAc...) asparagine" evidence="2">
    <location>
        <position position="45"/>
    </location>
</feature>
<feature type="glycosylation site" description="N-linked (GlcNAc...) asparagine" evidence="2">
    <location>
        <position position="239"/>
    </location>
</feature>
<feature type="disulfide bond" evidence="3">
    <location>
        <begin position="30"/>
        <end position="55"/>
    </location>
</feature>
<feature type="disulfide bond" evidence="3">
    <location>
        <begin position="70"/>
        <end position="145"/>
    </location>
</feature>
<feature type="disulfide bond" evidence="3">
    <location>
        <begin position="88"/>
        <end position="143"/>
    </location>
</feature>
<feature type="disulfide bond" evidence="3">
    <location>
        <begin position="282"/>
        <end position="309"/>
    </location>
</feature>
<feature type="disulfide bond" evidence="3">
    <location>
        <begin position="326"/>
        <end position="395"/>
    </location>
</feature>
<feature type="disulfide bond" evidence="3">
    <location>
        <begin position="335"/>
        <end position="393"/>
    </location>
</feature>
<gene>
    <name type="primary">PB47</name>
    <name type="ORF">PB001526.02.0</name>
    <name evidence="6" type="ORF">PBANKA_1359700</name>
</gene>
<evidence type="ECO:0000250" key="1"/>
<evidence type="ECO:0000255" key="2"/>
<evidence type="ECO:0000255" key="3">
    <source>
        <dbReference type="PROSITE-ProRule" id="PRU01038"/>
    </source>
</evidence>
<evidence type="ECO:0000269" key="4">
    <source>
    </source>
</evidence>
<evidence type="ECO:0000312" key="5">
    <source>
        <dbReference type="EMBL" id="AAG59814.1"/>
    </source>
</evidence>
<evidence type="ECO:0000312" key="6">
    <source>
        <dbReference type="EMBL" id="VUC57984.1"/>
    </source>
</evidence>
<evidence type="ECO:0000312" key="7">
    <source>
        <dbReference type="Proteomes" id="UP000074855"/>
    </source>
</evidence>